<comment type="function">
    <text>This is a seed storage protein.</text>
</comment>
<comment type="subunit">
    <text>Hexamer; each subunit is composed of an acidic and a basic chain derived from a single precursor and linked by a disulfide bond.</text>
</comment>
<comment type="similarity">
    <text evidence="4">Belongs to the 11S seed storage protein (globulins) family.</text>
</comment>
<sequence>MATTRFPSLLFYSCIFLLCNGSMAQLFGQSFTPWQSSRQGGLRGCKFDRLQAFEPLRQVRSQAGITEYFDEQNEQFRCAGVSVIRRVIEPQGLLLPQYHNAPGLVYILQGRGFTGLTFPGCPATFQQQFQQFDQARFAQGQSKSQNLKDEHQRVHHIKQGDVVALPAGIVHWCYNDGDAPIVAVYVFDVNNNANQLEPRQKEFLLAGNNKREQQFGQNIFSGFSVQLLSEALGISQQAAQKIQSQNDQRGEIIRVSQGLQFLKPFVSQQGPVEHQAYQPIQSQQEQSTQYQVGQSPQYQEGQSTQYQSGQSWDQSFNGLEENFCSLEARQNIENPKRADTYNPRAGRITHLNSKNFPTLNLVQMSATRVNLYQNAILSPYWNINAHSVMHMIQGRARVQVVNNHGQTVFNDILRRGQLLIIPQHYVVLKKAEREGCQYISFKTTPNSMVSYIAGKTSILRALPVDVLANAYRISRQESQNLKNNRGEEFGAFTPKFAQTGSQSYQDEGESSSTEKASE</sequence>
<evidence type="ECO:0000250" key="1"/>
<evidence type="ECO:0000255" key="2"/>
<evidence type="ECO:0000256" key="3">
    <source>
        <dbReference type="SAM" id="MobiDB-lite"/>
    </source>
</evidence>
<evidence type="ECO:0000305" key="4"/>
<organism>
    <name type="scientific">Avena sativa</name>
    <name type="common">Oat</name>
    <dbReference type="NCBI Taxonomy" id="4498"/>
    <lineage>
        <taxon>Eukaryota</taxon>
        <taxon>Viridiplantae</taxon>
        <taxon>Streptophyta</taxon>
        <taxon>Embryophyta</taxon>
        <taxon>Tracheophyta</taxon>
        <taxon>Spermatophyta</taxon>
        <taxon>Magnoliopsida</taxon>
        <taxon>Liliopsida</taxon>
        <taxon>Poales</taxon>
        <taxon>Poaceae</taxon>
        <taxon>BOP clade</taxon>
        <taxon>Pooideae</taxon>
        <taxon>Poodae</taxon>
        <taxon>Poeae</taxon>
        <taxon>Poeae Chloroplast Group 1 (Aveneae type)</taxon>
        <taxon>Aveninae</taxon>
        <taxon>Avena</taxon>
    </lineage>
</organism>
<accession>P12615</accession>
<dbReference type="EMBL" id="M21405">
    <property type="protein sequence ID" value="AAA32720.1"/>
    <property type="molecule type" value="mRNA"/>
</dbReference>
<dbReference type="PIR" id="JA0141">
    <property type="entry name" value="FWOAG1"/>
</dbReference>
<dbReference type="SMR" id="P12615"/>
<dbReference type="Allergome" id="10849">
    <property type="allergen name" value="Ave s 11S"/>
</dbReference>
<dbReference type="GO" id="GO:0045735">
    <property type="term" value="F:nutrient reservoir activity"/>
    <property type="evidence" value="ECO:0007669"/>
    <property type="project" value="UniProtKB-KW"/>
</dbReference>
<dbReference type="GO" id="GO:0048316">
    <property type="term" value="P:seed development"/>
    <property type="evidence" value="ECO:0007669"/>
    <property type="project" value="UniProtKB-ARBA"/>
</dbReference>
<dbReference type="CDD" id="cd02243">
    <property type="entry name" value="cupin_11S_legumin_C"/>
    <property type="match status" value="1"/>
</dbReference>
<dbReference type="CDD" id="cd02242">
    <property type="entry name" value="cupin_11S_legumin_N"/>
    <property type="match status" value="1"/>
</dbReference>
<dbReference type="FunFam" id="2.60.120.10:FF:000073">
    <property type="entry name" value="Glycinin G1"/>
    <property type="match status" value="1"/>
</dbReference>
<dbReference type="Gene3D" id="2.60.120.10">
    <property type="entry name" value="Jelly Rolls"/>
    <property type="match status" value="2"/>
</dbReference>
<dbReference type="InterPro" id="IPR022379">
    <property type="entry name" value="11S_seedstore_CS"/>
</dbReference>
<dbReference type="InterPro" id="IPR006044">
    <property type="entry name" value="11S_seedstore_pln"/>
</dbReference>
<dbReference type="InterPro" id="IPR006045">
    <property type="entry name" value="Cupin_1"/>
</dbReference>
<dbReference type="InterPro" id="IPR014710">
    <property type="entry name" value="RmlC-like_jellyroll"/>
</dbReference>
<dbReference type="InterPro" id="IPR011051">
    <property type="entry name" value="RmlC_Cupin_sf"/>
</dbReference>
<dbReference type="InterPro" id="IPR050253">
    <property type="entry name" value="Seed_Storage-Functional"/>
</dbReference>
<dbReference type="PANTHER" id="PTHR31189:SF35">
    <property type="entry name" value="12S SEED STORAGE PROTEIN CRB"/>
    <property type="match status" value="1"/>
</dbReference>
<dbReference type="PANTHER" id="PTHR31189">
    <property type="entry name" value="OS03G0336100 PROTEIN-RELATED"/>
    <property type="match status" value="1"/>
</dbReference>
<dbReference type="Pfam" id="PF00190">
    <property type="entry name" value="Cupin_1"/>
    <property type="match status" value="2"/>
</dbReference>
<dbReference type="PRINTS" id="PR00439">
    <property type="entry name" value="11SGLOBULIN"/>
</dbReference>
<dbReference type="SMART" id="SM00835">
    <property type="entry name" value="Cupin_1"/>
    <property type="match status" value="2"/>
</dbReference>
<dbReference type="SUPFAM" id="SSF51182">
    <property type="entry name" value="RmlC-like cupins"/>
    <property type="match status" value="1"/>
</dbReference>
<dbReference type="PROSITE" id="PS00305">
    <property type="entry name" value="11S_SEED_STORAGE"/>
    <property type="match status" value="1"/>
</dbReference>
<keyword id="KW-1015">Disulfide bond</keyword>
<keyword id="KW-0708">Seed storage protein</keyword>
<keyword id="KW-0732">Signal</keyword>
<keyword id="KW-0758">Storage protein</keyword>
<name>SSG1_AVESA</name>
<protein>
    <recommendedName>
        <fullName>12S seed storage globulin 1</fullName>
    </recommendedName>
    <component>
        <recommendedName>
            <fullName>12S seed storage globulin 1 acidic chain</fullName>
        </recommendedName>
    </component>
    <component>
        <recommendedName>
            <fullName>12S seed storage globulin 1 basic chain</fullName>
        </recommendedName>
    </component>
</protein>
<feature type="signal peptide">
    <location>
        <begin position="1"/>
        <end position="24"/>
    </location>
</feature>
<feature type="chain" id="PRO_0000032084" description="12S seed storage globulin 1 acidic chain">
    <location>
        <begin position="25"/>
        <end position="317"/>
    </location>
</feature>
<feature type="chain" id="PRO_0000032085" description="12S seed storage globulin 1 basic chain">
    <location>
        <begin position="318"/>
        <end position="518"/>
    </location>
</feature>
<feature type="domain" description="Cupin type-1 1" evidence="2">
    <location>
        <begin position="50"/>
        <end position="240"/>
    </location>
</feature>
<feature type="domain" description="Cupin type-1 2" evidence="2">
    <location>
        <begin position="330"/>
        <end position="479"/>
    </location>
</feature>
<feature type="region of interest" description="Disordered" evidence="3">
    <location>
        <begin position="281"/>
        <end position="311"/>
    </location>
</feature>
<feature type="region of interest" description="Disordered" evidence="3">
    <location>
        <begin position="496"/>
        <end position="518"/>
    </location>
</feature>
<feature type="compositionally biased region" description="Low complexity" evidence="3">
    <location>
        <begin position="281"/>
        <end position="295"/>
    </location>
</feature>
<feature type="compositionally biased region" description="Polar residues" evidence="3">
    <location>
        <begin position="296"/>
        <end position="311"/>
    </location>
</feature>
<feature type="disulfide bond" evidence="1">
    <location>
        <begin position="45"/>
        <end position="78"/>
    </location>
</feature>
<feature type="disulfide bond" description="Interchain (between acidic and basic chains)" evidence="2">
    <location>
        <begin position="121"/>
        <end position="324"/>
    </location>
</feature>
<reference key="1">
    <citation type="journal article" date="1988" name="Plant Physiol.">
        <title>Molecular characterization of oat seed globulins.</title>
        <authorList>
            <person name="Shotwell M.A."/>
            <person name="Afonso C."/>
            <person name="Davies E."/>
            <person name="Chesnut R.S."/>
            <person name="Larkins B.A."/>
        </authorList>
    </citation>
    <scope>NUCLEOTIDE SEQUENCE [MRNA]</scope>
    <source>
        <strain>cv. Williams</strain>
    </source>
</reference>
<proteinExistence type="evidence at transcript level"/>